<name>PFL_CHLRE</name>
<organism>
    <name type="scientific">Chlamydomonas reinhardtii</name>
    <name type="common">Chlamydomonas smithii</name>
    <dbReference type="NCBI Taxonomy" id="3055"/>
    <lineage>
        <taxon>Eukaryota</taxon>
        <taxon>Viridiplantae</taxon>
        <taxon>Chlorophyta</taxon>
        <taxon>core chlorophytes</taxon>
        <taxon>Chlorophyceae</taxon>
        <taxon>CS clade</taxon>
        <taxon>Chlamydomonadales</taxon>
        <taxon>Chlamydomonadaceae</taxon>
        <taxon>Chlamydomonas</taxon>
    </lineage>
</organism>
<protein>
    <recommendedName>
        <fullName>Formate acetyltransferase</fullName>
        <ecNumber>2.3.1.54</ecNumber>
    </recommendedName>
    <alternativeName>
        <fullName>Pyruvate formate-lyase</fullName>
    </alternativeName>
</protein>
<accession>P37836</accession>
<sequence>GSFPKYGNDDDRVDEIAEWVVSTFSSKLAKQHTYRNSVPTLSVLTITSNVVYGKKTGSTPDGRKKGEPFAPGANPLHGRDAHGALASLNSVAKLPYTMCLDGISNTFSLIPQVLGRGGEHERATNLASILDGYFANGGHHINVNVLNRSMLMDAVEHPEKYPNLTIRVSGYAVHFARLTREQQLEVIARTFHDTM</sequence>
<evidence type="ECO:0000250" key="1"/>
<evidence type="ECO:0000255" key="2">
    <source>
        <dbReference type="PROSITE-ProRule" id="PRU00493"/>
    </source>
</evidence>
<evidence type="ECO:0000255" key="3">
    <source>
        <dbReference type="PROSITE-ProRule" id="PRU00887"/>
    </source>
</evidence>
<evidence type="ECO:0000256" key="4">
    <source>
        <dbReference type="SAM" id="MobiDB-lite"/>
    </source>
</evidence>
<evidence type="ECO:0000305" key="5"/>
<comment type="catalytic activity">
    <reaction>
        <text>formate + acetyl-CoA = pyruvate + CoA</text>
        <dbReference type="Rhea" id="RHEA:11844"/>
        <dbReference type="ChEBI" id="CHEBI:15361"/>
        <dbReference type="ChEBI" id="CHEBI:15740"/>
        <dbReference type="ChEBI" id="CHEBI:57287"/>
        <dbReference type="ChEBI" id="CHEBI:57288"/>
        <dbReference type="EC" id="2.3.1.54"/>
    </reaction>
</comment>
<comment type="subcellular location">
    <subcellularLocation>
        <location evidence="1">Cytoplasm</location>
    </subcellularLocation>
</comment>
<comment type="similarity">
    <text evidence="5">Belongs to the glycyl radical enzyme (GRE) family. PFL subfamily.</text>
</comment>
<dbReference type="EC" id="2.3.1.54"/>
<dbReference type="EMBL" id="X66410">
    <property type="protein sequence ID" value="CAA47041.1"/>
    <property type="molecule type" value="mRNA"/>
</dbReference>
<dbReference type="PIR" id="S24997">
    <property type="entry name" value="S24997"/>
</dbReference>
<dbReference type="SMR" id="P37836"/>
<dbReference type="PaxDb" id="3055-EDP09457"/>
<dbReference type="ProMEX" id="P37836"/>
<dbReference type="eggNOG" id="ENOG502QSG9">
    <property type="taxonomic scope" value="Eukaryota"/>
</dbReference>
<dbReference type="BRENDA" id="2.3.1.54">
    <property type="organism ID" value="1318"/>
</dbReference>
<dbReference type="GO" id="GO:0005737">
    <property type="term" value="C:cytoplasm"/>
    <property type="evidence" value="ECO:0007669"/>
    <property type="project" value="UniProtKB-SubCell"/>
</dbReference>
<dbReference type="GO" id="GO:0008861">
    <property type="term" value="F:formate C-acetyltransferase activity"/>
    <property type="evidence" value="ECO:0007669"/>
    <property type="project" value="UniProtKB-EC"/>
</dbReference>
<dbReference type="Gene3D" id="3.20.70.20">
    <property type="match status" value="1"/>
</dbReference>
<dbReference type="InterPro" id="IPR050244">
    <property type="entry name" value="Auton_GlycylRad_Cofactor"/>
</dbReference>
<dbReference type="InterPro" id="IPR019777">
    <property type="entry name" value="Form_AcTrfase_GR_CS"/>
</dbReference>
<dbReference type="InterPro" id="IPR001150">
    <property type="entry name" value="Gly_radical"/>
</dbReference>
<dbReference type="InterPro" id="IPR004184">
    <property type="entry name" value="PFL_dom"/>
</dbReference>
<dbReference type="PANTHER" id="PTHR30191">
    <property type="entry name" value="FORMATE ACETYLTRANSFERASE"/>
    <property type="match status" value="1"/>
</dbReference>
<dbReference type="PANTHER" id="PTHR30191:SF0">
    <property type="entry name" value="FORMATE ACETYLTRANSFERASE 1"/>
    <property type="match status" value="1"/>
</dbReference>
<dbReference type="Pfam" id="PF01228">
    <property type="entry name" value="Gly_radical"/>
    <property type="match status" value="1"/>
</dbReference>
<dbReference type="Pfam" id="PF02901">
    <property type="entry name" value="PFL-like"/>
    <property type="match status" value="1"/>
</dbReference>
<dbReference type="SUPFAM" id="SSF51998">
    <property type="entry name" value="PFL-like glycyl radical enzymes"/>
    <property type="match status" value="1"/>
</dbReference>
<dbReference type="PROSITE" id="PS00850">
    <property type="entry name" value="GLY_RADICAL_1"/>
    <property type="match status" value="1"/>
</dbReference>
<dbReference type="PROSITE" id="PS51149">
    <property type="entry name" value="GLY_RADICAL_2"/>
    <property type="match status" value="1"/>
</dbReference>
<dbReference type="PROSITE" id="PS51554">
    <property type="entry name" value="PFL"/>
    <property type="match status" value="1"/>
</dbReference>
<reference key="1">
    <citation type="journal article" date="1993" name="Plant Sci.">
        <title>Isolation and characterization of cDNA sequences controlled by inorganic phosphate in Chlamydomonas reinhardtii.</title>
        <authorList>
            <person name="Dumont F."/>
            <person name="Joris B."/>
            <person name="Gumusboga A."/>
            <person name="Bruyninx M."/>
            <person name="Loppes R."/>
        </authorList>
    </citation>
    <scope>NUCLEOTIDE SEQUENCE [MRNA]</scope>
    <source>
        <strain>137c / CC-125</strain>
    </source>
</reference>
<gene>
    <name type="primary">PFL</name>
</gene>
<keyword id="KW-0012">Acyltransferase</keyword>
<keyword id="KW-0963">Cytoplasm</keyword>
<keyword id="KW-0556">Organic radical</keyword>
<keyword id="KW-0808">Transferase</keyword>
<feature type="chain" id="PRO_0000166696" description="Formate acetyltransferase">
    <location>
        <begin position="1" status="less than"/>
        <end position="195"/>
    </location>
</feature>
<feature type="domain" description="PFL" evidence="3">
    <location>
        <begin position="1"/>
        <end position="64"/>
    </location>
</feature>
<feature type="domain" description="Glycine radical" evidence="2">
    <location>
        <begin position="71"/>
        <end position="195"/>
    </location>
</feature>
<feature type="region of interest" description="Disordered" evidence="4">
    <location>
        <begin position="54"/>
        <end position="76"/>
    </location>
</feature>
<feature type="modified residue" description="Glycine radical" evidence="2">
    <location>
        <position position="170"/>
    </location>
</feature>
<feature type="non-terminal residue">
    <location>
        <position position="1"/>
    </location>
</feature>
<proteinExistence type="evidence at transcript level"/>